<comment type="function">
    <text evidence="1">Catalyzes the attachment of isoleucine to tRNA(Ile). As IleRS can inadvertently accommodate and process structurally similar amino acids such as valine, to avoid such errors it has two additional distinct tRNA(Ile)-dependent editing activities. One activity is designated as 'pretransfer' editing and involves the hydrolysis of activated Val-AMP. The other activity is designated 'posttransfer' editing and involves deacylation of mischarged Val-tRNA(Ile).</text>
</comment>
<comment type="catalytic activity">
    <reaction evidence="1">
        <text>tRNA(Ile) + L-isoleucine + ATP = L-isoleucyl-tRNA(Ile) + AMP + diphosphate</text>
        <dbReference type="Rhea" id="RHEA:11060"/>
        <dbReference type="Rhea" id="RHEA-COMP:9666"/>
        <dbReference type="Rhea" id="RHEA-COMP:9695"/>
        <dbReference type="ChEBI" id="CHEBI:30616"/>
        <dbReference type="ChEBI" id="CHEBI:33019"/>
        <dbReference type="ChEBI" id="CHEBI:58045"/>
        <dbReference type="ChEBI" id="CHEBI:78442"/>
        <dbReference type="ChEBI" id="CHEBI:78528"/>
        <dbReference type="ChEBI" id="CHEBI:456215"/>
        <dbReference type="EC" id="6.1.1.5"/>
    </reaction>
</comment>
<comment type="subunit">
    <text evidence="1">Monomer.</text>
</comment>
<comment type="subcellular location">
    <subcellularLocation>
        <location evidence="1">Cytoplasm</location>
    </subcellularLocation>
</comment>
<comment type="domain">
    <text evidence="1">IleRS has two distinct active sites: one for aminoacylation and one for editing. The misactivated valine is translocated from the active site to the editing site, which sterically excludes the correctly activated isoleucine. The single editing site contains two valyl binding pockets, one specific for each substrate (Val-AMP or Val-tRNA(Ile)).</text>
</comment>
<comment type="similarity">
    <text evidence="1">Belongs to the class-I aminoacyl-tRNA synthetase family. IleS type 1 subfamily.</text>
</comment>
<proteinExistence type="inferred from homology"/>
<protein>
    <recommendedName>
        <fullName evidence="1">Isoleucine--tRNA ligase</fullName>
        <ecNumber evidence="1">6.1.1.5</ecNumber>
    </recommendedName>
    <alternativeName>
        <fullName evidence="1">Isoleucyl-tRNA synthetase</fullName>
        <shortName evidence="1">IleRS</shortName>
    </alternativeName>
</protein>
<gene>
    <name evidence="1" type="primary">ileS</name>
    <name type="ordered locus">M6_Spy1264</name>
</gene>
<keyword id="KW-0030">Aminoacyl-tRNA synthetase</keyword>
<keyword id="KW-0067">ATP-binding</keyword>
<keyword id="KW-0963">Cytoplasm</keyword>
<keyword id="KW-0436">Ligase</keyword>
<keyword id="KW-0547">Nucleotide-binding</keyword>
<keyword id="KW-0648">Protein biosynthesis</keyword>
<feature type="chain" id="PRO_0000098485" description="Isoleucine--tRNA ligase">
    <location>
        <begin position="1"/>
        <end position="933"/>
    </location>
</feature>
<feature type="short sequence motif" description="'HIGH' region">
    <location>
        <begin position="57"/>
        <end position="67"/>
    </location>
</feature>
<feature type="short sequence motif" description="'KMSKS' region">
    <location>
        <begin position="595"/>
        <end position="599"/>
    </location>
</feature>
<feature type="binding site" evidence="1">
    <location>
        <position position="554"/>
    </location>
    <ligand>
        <name>L-isoleucyl-5'-AMP</name>
        <dbReference type="ChEBI" id="CHEBI:178002"/>
    </ligand>
</feature>
<feature type="binding site" evidence="1">
    <location>
        <position position="598"/>
    </location>
    <ligand>
        <name>ATP</name>
        <dbReference type="ChEBI" id="CHEBI:30616"/>
    </ligand>
</feature>
<dbReference type="EC" id="6.1.1.5" evidence="1"/>
<dbReference type="EMBL" id="CP000003">
    <property type="protein sequence ID" value="AAT87399.1"/>
    <property type="molecule type" value="Genomic_DNA"/>
</dbReference>
<dbReference type="RefSeq" id="WP_011184754.1">
    <property type="nucleotide sequence ID" value="NC_006086.1"/>
</dbReference>
<dbReference type="SMR" id="Q5XB14"/>
<dbReference type="KEGG" id="spa:M6_Spy1264"/>
<dbReference type="HOGENOM" id="CLU_001493_7_1_9"/>
<dbReference type="Proteomes" id="UP000001167">
    <property type="component" value="Chromosome"/>
</dbReference>
<dbReference type="GO" id="GO:0005829">
    <property type="term" value="C:cytosol"/>
    <property type="evidence" value="ECO:0007669"/>
    <property type="project" value="TreeGrafter"/>
</dbReference>
<dbReference type="GO" id="GO:0002161">
    <property type="term" value="F:aminoacyl-tRNA deacylase activity"/>
    <property type="evidence" value="ECO:0007669"/>
    <property type="project" value="InterPro"/>
</dbReference>
<dbReference type="GO" id="GO:0005524">
    <property type="term" value="F:ATP binding"/>
    <property type="evidence" value="ECO:0007669"/>
    <property type="project" value="UniProtKB-UniRule"/>
</dbReference>
<dbReference type="GO" id="GO:0004822">
    <property type="term" value="F:isoleucine-tRNA ligase activity"/>
    <property type="evidence" value="ECO:0007669"/>
    <property type="project" value="UniProtKB-UniRule"/>
</dbReference>
<dbReference type="GO" id="GO:0000049">
    <property type="term" value="F:tRNA binding"/>
    <property type="evidence" value="ECO:0007669"/>
    <property type="project" value="InterPro"/>
</dbReference>
<dbReference type="GO" id="GO:0006428">
    <property type="term" value="P:isoleucyl-tRNA aminoacylation"/>
    <property type="evidence" value="ECO:0007669"/>
    <property type="project" value="UniProtKB-UniRule"/>
</dbReference>
<dbReference type="CDD" id="cd07960">
    <property type="entry name" value="Anticodon_Ia_Ile_BEm"/>
    <property type="match status" value="1"/>
</dbReference>
<dbReference type="CDD" id="cd00818">
    <property type="entry name" value="IleRS_core"/>
    <property type="match status" value="1"/>
</dbReference>
<dbReference type="FunFam" id="1.10.10.830:FF:000001">
    <property type="entry name" value="Isoleucine--tRNA ligase"/>
    <property type="match status" value="1"/>
</dbReference>
<dbReference type="FunFam" id="1.10.730.20:FF:000001">
    <property type="entry name" value="Isoleucine--tRNA ligase"/>
    <property type="match status" value="1"/>
</dbReference>
<dbReference type="FunFam" id="3.40.50.620:FF:000092">
    <property type="entry name" value="Isoleucine--tRNA ligase"/>
    <property type="match status" value="1"/>
</dbReference>
<dbReference type="FunFam" id="3.90.740.10:FF:000006">
    <property type="entry name" value="Isoleucine--tRNA ligase"/>
    <property type="match status" value="1"/>
</dbReference>
<dbReference type="Gene3D" id="1.10.730.20">
    <property type="match status" value="1"/>
</dbReference>
<dbReference type="Gene3D" id="3.40.50.620">
    <property type="entry name" value="HUPs"/>
    <property type="match status" value="2"/>
</dbReference>
<dbReference type="Gene3D" id="1.10.10.830">
    <property type="entry name" value="Ile-tRNA synthetase CP2 domain-like"/>
    <property type="match status" value="1"/>
</dbReference>
<dbReference type="HAMAP" id="MF_02002">
    <property type="entry name" value="Ile_tRNA_synth_type1"/>
    <property type="match status" value="1"/>
</dbReference>
<dbReference type="InterPro" id="IPR001412">
    <property type="entry name" value="aa-tRNA-synth_I_CS"/>
</dbReference>
<dbReference type="InterPro" id="IPR002300">
    <property type="entry name" value="aa-tRNA-synth_Ia"/>
</dbReference>
<dbReference type="InterPro" id="IPR033708">
    <property type="entry name" value="Anticodon_Ile_BEm"/>
</dbReference>
<dbReference type="InterPro" id="IPR002301">
    <property type="entry name" value="Ile-tRNA-ligase"/>
</dbReference>
<dbReference type="InterPro" id="IPR023585">
    <property type="entry name" value="Ile-tRNA-ligase_type1"/>
</dbReference>
<dbReference type="InterPro" id="IPR050081">
    <property type="entry name" value="Ile-tRNA_ligase"/>
</dbReference>
<dbReference type="InterPro" id="IPR013155">
    <property type="entry name" value="M/V/L/I-tRNA-synth_anticd-bd"/>
</dbReference>
<dbReference type="InterPro" id="IPR014729">
    <property type="entry name" value="Rossmann-like_a/b/a_fold"/>
</dbReference>
<dbReference type="InterPro" id="IPR009080">
    <property type="entry name" value="tRNAsynth_Ia_anticodon-bd"/>
</dbReference>
<dbReference type="InterPro" id="IPR009008">
    <property type="entry name" value="Val/Leu/Ile-tRNA-synth_edit"/>
</dbReference>
<dbReference type="NCBIfam" id="TIGR00392">
    <property type="entry name" value="ileS"/>
    <property type="match status" value="1"/>
</dbReference>
<dbReference type="PANTHER" id="PTHR42765:SF1">
    <property type="entry name" value="ISOLEUCINE--TRNA LIGASE, MITOCHONDRIAL"/>
    <property type="match status" value="1"/>
</dbReference>
<dbReference type="PANTHER" id="PTHR42765">
    <property type="entry name" value="SOLEUCYL-TRNA SYNTHETASE"/>
    <property type="match status" value="1"/>
</dbReference>
<dbReference type="Pfam" id="PF08264">
    <property type="entry name" value="Anticodon_1"/>
    <property type="match status" value="1"/>
</dbReference>
<dbReference type="Pfam" id="PF00133">
    <property type="entry name" value="tRNA-synt_1"/>
    <property type="match status" value="1"/>
</dbReference>
<dbReference type="PRINTS" id="PR00984">
    <property type="entry name" value="TRNASYNTHILE"/>
</dbReference>
<dbReference type="SUPFAM" id="SSF47323">
    <property type="entry name" value="Anticodon-binding domain of a subclass of class I aminoacyl-tRNA synthetases"/>
    <property type="match status" value="1"/>
</dbReference>
<dbReference type="SUPFAM" id="SSF52374">
    <property type="entry name" value="Nucleotidylyl transferase"/>
    <property type="match status" value="1"/>
</dbReference>
<dbReference type="SUPFAM" id="SSF50677">
    <property type="entry name" value="ValRS/IleRS/LeuRS editing domain"/>
    <property type="match status" value="1"/>
</dbReference>
<dbReference type="PROSITE" id="PS00178">
    <property type="entry name" value="AA_TRNA_LIGASE_I"/>
    <property type="match status" value="1"/>
</dbReference>
<reference key="1">
    <citation type="journal article" date="2004" name="J. Infect. Dis.">
        <title>Progress toward characterization of the group A Streptococcus metagenome: complete genome sequence of a macrolide-resistant serotype M6 strain.</title>
        <authorList>
            <person name="Banks D.J."/>
            <person name="Porcella S.F."/>
            <person name="Barbian K.D."/>
            <person name="Beres S.B."/>
            <person name="Philips L.E."/>
            <person name="Voyich J.M."/>
            <person name="DeLeo F.R."/>
            <person name="Martin J.M."/>
            <person name="Somerville G.A."/>
            <person name="Musser J.M."/>
        </authorList>
    </citation>
    <scope>NUCLEOTIDE SEQUENCE [LARGE SCALE GENOMIC DNA]</scope>
    <source>
        <strain>ATCC BAA-946 / MGAS10394</strain>
    </source>
</reference>
<name>SYI_STRP6</name>
<evidence type="ECO:0000255" key="1">
    <source>
        <dbReference type="HAMAP-Rule" id="MF_02002"/>
    </source>
</evidence>
<sequence length="933" mass="105134">MKLKETLNLGKIAFPMRADLPNKEPQWQAAWEQAELYKKRQELNAGKPAFHLHDGPPYANGNIHVGHALNKISKDIIVRSKSMSGFQAPYVPGWDTHGLPIEQVLAKQGIKRKEMNLAEYLEMCRQYALSQVDKQRDDFKRLGVSADWENPYVTLDPQFEADQIRVFGAMAEKGYIYRGAKPVYWSWSSESALAEAEIEYHDIDSTSLYYANKVKDGKGILDTNTYIVVWTTTPFTVTASRGLTVGPDMDYLVVKPAGSDRQYVVAEGLLDSLAGKFGWESFETLASHKGADLEYIVTEHPWDTDVEELVILGDHVTLESGTGIVHTAPGFGEDDYNVGTKYKLEVAVTVDERGLMMENAGPDFHGQFYNKVTPIVIDKLGDLLLAQEVINHSYPFDWRTKKPIIWRAVPQWFASVSDFRQDILDEIEKTTFHPSWGETRLYNMIRDRGDWVISRQRAWGVPLPIFYAEDGTAIMTKEVTDHVADLFQENGSIIWWQKEAKDLLPEGFTHPGSPNGEFTKETDIMDVWFDSGSSWNGVMNARENLSYPADLYLEGSDQYRGWFNSSLITSVAVNGHAPYKAILSQGFVLDGKGEKMSKSKGNIISPNDVAKQYGADILRLWVASVDTDNDVRVSMEILGQVSETYRKIRNTLRFLIANTSDFNPATDTVAYADLGAVDKYMTIVFNQLVATITDAYERYDFMAIYKAVVNFVTVDLSAFYLDFAKDVVYIEAANSLERRRMQTVFYDILVKITKLLTPILPHTTEEIWSYLEYESEAFVQLAEMPVAETFSAQEDILEAWSAFMTLRTQAQKALEEARNAKIIGKSLEAHLTIYASEEVKTLLTALDSDIALLLIVSQLTIADLADAPADAVAFEGIAFMVEHAIGEVCERSRRIDPTTRMRSYNAFVCDHSAKIIEENFPEAVAEGFEESGK</sequence>
<organism>
    <name type="scientific">Streptococcus pyogenes serotype M6 (strain ATCC BAA-946 / MGAS10394)</name>
    <dbReference type="NCBI Taxonomy" id="286636"/>
    <lineage>
        <taxon>Bacteria</taxon>
        <taxon>Bacillati</taxon>
        <taxon>Bacillota</taxon>
        <taxon>Bacilli</taxon>
        <taxon>Lactobacillales</taxon>
        <taxon>Streptococcaceae</taxon>
        <taxon>Streptococcus</taxon>
    </lineage>
</organism>
<accession>Q5XB14</accession>